<reference key="1">
    <citation type="journal article" date="2011" name="PLoS ONE">
        <title>The genome of Akkermansia muciniphila, a dedicated intestinal mucin degrader, and its use in exploring intestinal metagenomes.</title>
        <authorList>
            <person name="van Passel M.W."/>
            <person name="Kant R."/>
            <person name="Zoetendal E.G."/>
            <person name="Plugge C.M."/>
            <person name="Derrien M."/>
            <person name="Malfatti S.A."/>
            <person name="Chain P.S."/>
            <person name="Woyke T."/>
            <person name="Palva A."/>
            <person name="de Vos W.M."/>
            <person name="Smidt H."/>
        </authorList>
    </citation>
    <scope>NUCLEOTIDE SEQUENCE [LARGE SCALE GENOMIC DNA]</scope>
    <source>
        <strain>ATCC BAA-835 / DSM 22959 / JCM 33894 / BCRC 81048 / CCUG 64013 / CIP 107961 / Muc</strain>
    </source>
</reference>
<protein>
    <recommendedName>
        <fullName evidence="1">Ribosomal protein uS12 methylthiotransferase RimO</fullName>
        <shortName evidence="1">uS12 MTTase</shortName>
        <shortName evidence="1">uS12 methylthiotransferase</shortName>
        <ecNumber evidence="1">2.8.4.4</ecNumber>
    </recommendedName>
    <alternativeName>
        <fullName evidence="1">Ribosomal protein uS12 (aspartate-C(3))-methylthiotransferase</fullName>
    </alternativeName>
    <alternativeName>
        <fullName evidence="1">Ribosome maturation factor RimO</fullName>
    </alternativeName>
</protein>
<feature type="chain" id="PRO_0000374691" description="Ribosomal protein uS12 methylthiotransferase RimO">
    <location>
        <begin position="1"/>
        <end position="452"/>
    </location>
</feature>
<feature type="domain" description="MTTase N-terminal" evidence="1">
    <location>
        <begin position="3"/>
        <end position="122"/>
    </location>
</feature>
<feature type="domain" description="Radical SAM core" evidence="2">
    <location>
        <begin position="148"/>
        <end position="392"/>
    </location>
</feature>
<feature type="domain" description="TRAM" evidence="1">
    <location>
        <begin position="395"/>
        <end position="452"/>
    </location>
</feature>
<feature type="binding site" evidence="1">
    <location>
        <position position="12"/>
    </location>
    <ligand>
        <name>[4Fe-4S] cluster</name>
        <dbReference type="ChEBI" id="CHEBI:49883"/>
        <label>1</label>
    </ligand>
</feature>
<feature type="binding site" evidence="1">
    <location>
        <position position="48"/>
    </location>
    <ligand>
        <name>[4Fe-4S] cluster</name>
        <dbReference type="ChEBI" id="CHEBI:49883"/>
        <label>1</label>
    </ligand>
</feature>
<feature type="binding site" evidence="1">
    <location>
        <position position="85"/>
    </location>
    <ligand>
        <name>[4Fe-4S] cluster</name>
        <dbReference type="ChEBI" id="CHEBI:49883"/>
        <label>1</label>
    </ligand>
</feature>
<feature type="binding site" evidence="1">
    <location>
        <position position="162"/>
    </location>
    <ligand>
        <name>[4Fe-4S] cluster</name>
        <dbReference type="ChEBI" id="CHEBI:49883"/>
        <label>2</label>
        <note>4Fe-4S-S-AdoMet</note>
    </ligand>
</feature>
<feature type="binding site" evidence="1">
    <location>
        <position position="166"/>
    </location>
    <ligand>
        <name>[4Fe-4S] cluster</name>
        <dbReference type="ChEBI" id="CHEBI:49883"/>
        <label>2</label>
        <note>4Fe-4S-S-AdoMet</note>
    </ligand>
</feature>
<feature type="binding site" evidence="1">
    <location>
        <position position="169"/>
    </location>
    <ligand>
        <name>[4Fe-4S] cluster</name>
        <dbReference type="ChEBI" id="CHEBI:49883"/>
        <label>2</label>
        <note>4Fe-4S-S-AdoMet</note>
    </ligand>
</feature>
<proteinExistence type="inferred from homology"/>
<sequence length="452" mass="50864">MPLTVGLISLGCPKNLVDSEIMIGHLQKAGMTMTPEPELADVMVVNTCAFIDQAKQEAIDAILDIVRARENGAYPENQKLIVAGCLSQRFRKELPALLPEVDAFIGPDQITKLPEIITQVMDRTIQDRNFIEGKCRYVPDWNTPRYRLTPPHTAYIKIAEGCNHGCAYCIIPMIRGRHRSRSQQDVVREAETLIRSGVKEICLIAQDITYYGMDKWTDARPNRRSAVDSSRGESLASLLRALNAIEGEFWIRLLYTHPAHWSDELTAAIAECPKVARYVDIPLQHISDNMLDAMQRVTDGNYIRTLLRNIRKAVPGIAIRTTFITGFPGETEDDHQELMEFIEEFRFERAGIFTFSREEGTKAYKMPNQVHHRTKARRYNEATLLLARLASETGQEQIGRQIRVLVDAPGVARTEWDAPDIDGTVSVPLTLPVGQFATVTVTDAVAYELTAE</sequence>
<comment type="function">
    <text evidence="1">Catalyzes the methylthiolation of an aspartic acid residue of ribosomal protein uS12.</text>
</comment>
<comment type="catalytic activity">
    <reaction evidence="1">
        <text>L-aspartate(89)-[ribosomal protein uS12]-hydrogen + (sulfur carrier)-SH + AH2 + 2 S-adenosyl-L-methionine = 3-methylsulfanyl-L-aspartate(89)-[ribosomal protein uS12]-hydrogen + (sulfur carrier)-H + 5'-deoxyadenosine + L-methionine + A + S-adenosyl-L-homocysteine + 2 H(+)</text>
        <dbReference type="Rhea" id="RHEA:37087"/>
        <dbReference type="Rhea" id="RHEA-COMP:10460"/>
        <dbReference type="Rhea" id="RHEA-COMP:10461"/>
        <dbReference type="Rhea" id="RHEA-COMP:14737"/>
        <dbReference type="Rhea" id="RHEA-COMP:14739"/>
        <dbReference type="ChEBI" id="CHEBI:13193"/>
        <dbReference type="ChEBI" id="CHEBI:15378"/>
        <dbReference type="ChEBI" id="CHEBI:17319"/>
        <dbReference type="ChEBI" id="CHEBI:17499"/>
        <dbReference type="ChEBI" id="CHEBI:29917"/>
        <dbReference type="ChEBI" id="CHEBI:29961"/>
        <dbReference type="ChEBI" id="CHEBI:57844"/>
        <dbReference type="ChEBI" id="CHEBI:57856"/>
        <dbReference type="ChEBI" id="CHEBI:59789"/>
        <dbReference type="ChEBI" id="CHEBI:64428"/>
        <dbReference type="ChEBI" id="CHEBI:73599"/>
        <dbReference type="EC" id="2.8.4.4"/>
    </reaction>
</comment>
<comment type="cofactor">
    <cofactor evidence="1">
        <name>[4Fe-4S] cluster</name>
        <dbReference type="ChEBI" id="CHEBI:49883"/>
    </cofactor>
    <text evidence="1">Binds 2 [4Fe-4S] clusters. One cluster is coordinated with 3 cysteines and an exchangeable S-adenosyl-L-methionine.</text>
</comment>
<comment type="subcellular location">
    <subcellularLocation>
        <location evidence="1">Cytoplasm</location>
    </subcellularLocation>
</comment>
<comment type="similarity">
    <text evidence="1">Belongs to the methylthiotransferase family. RimO subfamily.</text>
</comment>
<gene>
    <name evidence="1" type="primary">rimO</name>
    <name type="ordered locus">Amuc_1623</name>
</gene>
<organism>
    <name type="scientific">Akkermansia muciniphila (strain ATCC BAA-835 / DSM 22959 / JCM 33894 / BCRC 81048 / CCUG 64013 / CIP 107961 / Muc)</name>
    <dbReference type="NCBI Taxonomy" id="349741"/>
    <lineage>
        <taxon>Bacteria</taxon>
        <taxon>Pseudomonadati</taxon>
        <taxon>Verrucomicrobiota</taxon>
        <taxon>Verrucomicrobiia</taxon>
        <taxon>Verrucomicrobiales</taxon>
        <taxon>Akkermansiaceae</taxon>
        <taxon>Akkermansia</taxon>
    </lineage>
</organism>
<keyword id="KW-0004">4Fe-4S</keyword>
<keyword id="KW-0963">Cytoplasm</keyword>
<keyword id="KW-0408">Iron</keyword>
<keyword id="KW-0411">Iron-sulfur</keyword>
<keyword id="KW-0479">Metal-binding</keyword>
<keyword id="KW-1185">Reference proteome</keyword>
<keyword id="KW-0949">S-adenosyl-L-methionine</keyword>
<keyword id="KW-0808">Transferase</keyword>
<dbReference type="EC" id="2.8.4.4" evidence="1"/>
<dbReference type="EMBL" id="CP001071">
    <property type="protein sequence ID" value="ACD05443.1"/>
    <property type="molecule type" value="Genomic_DNA"/>
</dbReference>
<dbReference type="RefSeq" id="WP_012420658.1">
    <property type="nucleotide sequence ID" value="NC_010655.1"/>
</dbReference>
<dbReference type="SMR" id="B2ULZ9"/>
<dbReference type="STRING" id="349741.Amuc_1623"/>
<dbReference type="PaxDb" id="349741-Amuc_1623"/>
<dbReference type="KEGG" id="amu:Amuc_1623"/>
<dbReference type="eggNOG" id="COG0621">
    <property type="taxonomic scope" value="Bacteria"/>
</dbReference>
<dbReference type="HOGENOM" id="CLU_018697_0_1_0"/>
<dbReference type="OrthoDB" id="9805215at2"/>
<dbReference type="BioCyc" id="AMUC349741:G1GBX-1730-MONOMER"/>
<dbReference type="Proteomes" id="UP000001031">
    <property type="component" value="Chromosome"/>
</dbReference>
<dbReference type="GO" id="GO:0005829">
    <property type="term" value="C:cytosol"/>
    <property type="evidence" value="ECO:0007669"/>
    <property type="project" value="TreeGrafter"/>
</dbReference>
<dbReference type="GO" id="GO:0051539">
    <property type="term" value="F:4 iron, 4 sulfur cluster binding"/>
    <property type="evidence" value="ECO:0007669"/>
    <property type="project" value="UniProtKB-UniRule"/>
</dbReference>
<dbReference type="GO" id="GO:0035599">
    <property type="term" value="F:aspartic acid methylthiotransferase activity"/>
    <property type="evidence" value="ECO:0007669"/>
    <property type="project" value="TreeGrafter"/>
</dbReference>
<dbReference type="GO" id="GO:0046872">
    <property type="term" value="F:metal ion binding"/>
    <property type="evidence" value="ECO:0007669"/>
    <property type="project" value="UniProtKB-KW"/>
</dbReference>
<dbReference type="GO" id="GO:0103039">
    <property type="term" value="F:protein methylthiotransferase activity"/>
    <property type="evidence" value="ECO:0007669"/>
    <property type="project" value="UniProtKB-EC"/>
</dbReference>
<dbReference type="GO" id="GO:0006400">
    <property type="term" value="P:tRNA modification"/>
    <property type="evidence" value="ECO:0007669"/>
    <property type="project" value="InterPro"/>
</dbReference>
<dbReference type="CDD" id="cd01335">
    <property type="entry name" value="Radical_SAM"/>
    <property type="match status" value="1"/>
</dbReference>
<dbReference type="FunFam" id="3.40.50.12160:FF:000003">
    <property type="entry name" value="CDK5 regulatory subunit-associated protein 1"/>
    <property type="match status" value="1"/>
</dbReference>
<dbReference type="FunFam" id="3.80.30.20:FF:000001">
    <property type="entry name" value="tRNA-2-methylthio-N(6)-dimethylallyladenosine synthase 2"/>
    <property type="match status" value="1"/>
</dbReference>
<dbReference type="Gene3D" id="3.40.50.12160">
    <property type="entry name" value="Methylthiotransferase, N-terminal domain"/>
    <property type="match status" value="1"/>
</dbReference>
<dbReference type="Gene3D" id="2.40.50.140">
    <property type="entry name" value="Nucleic acid-binding proteins"/>
    <property type="match status" value="1"/>
</dbReference>
<dbReference type="Gene3D" id="3.80.30.20">
    <property type="entry name" value="tm_1862 like domain"/>
    <property type="match status" value="1"/>
</dbReference>
<dbReference type="HAMAP" id="MF_01865">
    <property type="entry name" value="MTTase_RimO"/>
    <property type="match status" value="1"/>
</dbReference>
<dbReference type="InterPro" id="IPR006638">
    <property type="entry name" value="Elp3/MiaA/NifB-like_rSAM"/>
</dbReference>
<dbReference type="InterPro" id="IPR005839">
    <property type="entry name" value="Methylthiotransferase"/>
</dbReference>
<dbReference type="InterPro" id="IPR020612">
    <property type="entry name" value="Methylthiotransferase_CS"/>
</dbReference>
<dbReference type="InterPro" id="IPR013848">
    <property type="entry name" value="Methylthiotransferase_N"/>
</dbReference>
<dbReference type="InterPro" id="IPR038135">
    <property type="entry name" value="Methylthiotransferase_N_sf"/>
</dbReference>
<dbReference type="InterPro" id="IPR012340">
    <property type="entry name" value="NA-bd_OB-fold"/>
</dbReference>
<dbReference type="InterPro" id="IPR005840">
    <property type="entry name" value="Ribosomal_uS12_MeSTrfase_RimO"/>
</dbReference>
<dbReference type="InterPro" id="IPR007197">
    <property type="entry name" value="rSAM"/>
</dbReference>
<dbReference type="InterPro" id="IPR023404">
    <property type="entry name" value="rSAM_horseshoe"/>
</dbReference>
<dbReference type="InterPro" id="IPR002792">
    <property type="entry name" value="TRAM_dom"/>
</dbReference>
<dbReference type="NCBIfam" id="TIGR01125">
    <property type="entry name" value="30S ribosomal protein S12 methylthiotransferase RimO"/>
    <property type="match status" value="1"/>
</dbReference>
<dbReference type="NCBIfam" id="TIGR00089">
    <property type="entry name" value="MiaB/RimO family radical SAM methylthiotransferase"/>
    <property type="match status" value="1"/>
</dbReference>
<dbReference type="PANTHER" id="PTHR43837">
    <property type="entry name" value="RIBOSOMAL PROTEIN S12 METHYLTHIOTRANSFERASE RIMO"/>
    <property type="match status" value="1"/>
</dbReference>
<dbReference type="PANTHER" id="PTHR43837:SF1">
    <property type="entry name" value="RIBOSOMAL PROTEIN US12 METHYLTHIOTRANSFERASE RIMO"/>
    <property type="match status" value="1"/>
</dbReference>
<dbReference type="Pfam" id="PF04055">
    <property type="entry name" value="Radical_SAM"/>
    <property type="match status" value="1"/>
</dbReference>
<dbReference type="Pfam" id="PF18693">
    <property type="entry name" value="TRAM_2"/>
    <property type="match status" value="1"/>
</dbReference>
<dbReference type="Pfam" id="PF00919">
    <property type="entry name" value="UPF0004"/>
    <property type="match status" value="1"/>
</dbReference>
<dbReference type="SFLD" id="SFLDG01082">
    <property type="entry name" value="B12-binding_domain_containing"/>
    <property type="match status" value="1"/>
</dbReference>
<dbReference type="SFLD" id="SFLDS00029">
    <property type="entry name" value="Radical_SAM"/>
    <property type="match status" value="1"/>
</dbReference>
<dbReference type="SFLD" id="SFLDF00274">
    <property type="entry name" value="ribosomal_protein_S12_methylth"/>
    <property type="match status" value="1"/>
</dbReference>
<dbReference type="SMART" id="SM00729">
    <property type="entry name" value="Elp3"/>
    <property type="match status" value="1"/>
</dbReference>
<dbReference type="SUPFAM" id="SSF102114">
    <property type="entry name" value="Radical SAM enzymes"/>
    <property type="match status" value="1"/>
</dbReference>
<dbReference type="PROSITE" id="PS51449">
    <property type="entry name" value="MTTASE_N"/>
    <property type="match status" value="1"/>
</dbReference>
<dbReference type="PROSITE" id="PS01278">
    <property type="entry name" value="MTTASE_RADICAL"/>
    <property type="match status" value="1"/>
</dbReference>
<dbReference type="PROSITE" id="PS51918">
    <property type="entry name" value="RADICAL_SAM"/>
    <property type="match status" value="1"/>
</dbReference>
<dbReference type="PROSITE" id="PS50926">
    <property type="entry name" value="TRAM"/>
    <property type="match status" value="1"/>
</dbReference>
<name>RIMO_AKKM8</name>
<accession>B2ULZ9</accession>
<evidence type="ECO:0000255" key="1">
    <source>
        <dbReference type="HAMAP-Rule" id="MF_01865"/>
    </source>
</evidence>
<evidence type="ECO:0000255" key="2">
    <source>
        <dbReference type="PROSITE-ProRule" id="PRU01266"/>
    </source>
</evidence>